<proteinExistence type="inferred from homology"/>
<accession>Q8ZD89</accession>
<accession>Q0WDJ1</accession>
<accession>Q8D107</accession>
<keyword id="KW-0067">ATP-binding</keyword>
<keyword id="KW-0378">Hydrolase</keyword>
<keyword id="KW-0547">Nucleotide-binding</keyword>
<keyword id="KW-1185">Reference proteome</keyword>
<evidence type="ECO:0000255" key="1">
    <source>
        <dbReference type="HAMAP-Rule" id="MF_00691"/>
    </source>
</evidence>
<evidence type="ECO:0000305" key="2"/>
<gene>
    <name evidence="1" type="primary">pxpA</name>
    <name type="ordered locus">YPO2700</name>
    <name type="ordered locus">y1276</name>
    <name type="ordered locus">YP_2504</name>
</gene>
<protein>
    <recommendedName>
        <fullName evidence="1">5-oxoprolinase subunit A</fullName>
        <shortName evidence="1">5-OPase subunit A</shortName>
        <ecNumber evidence="1">3.5.2.9</ecNumber>
    </recommendedName>
    <alternativeName>
        <fullName evidence="1">5-oxoprolinase (ATP-hydrolyzing) subunit A</fullName>
    </alternativeName>
</protein>
<comment type="function">
    <text evidence="1">Catalyzes the cleavage of 5-oxoproline to form L-glutamate coupled to the hydrolysis of ATP to ADP and inorganic phosphate.</text>
</comment>
<comment type="catalytic activity">
    <reaction evidence="1">
        <text>5-oxo-L-proline + ATP + 2 H2O = L-glutamate + ADP + phosphate + H(+)</text>
        <dbReference type="Rhea" id="RHEA:10348"/>
        <dbReference type="ChEBI" id="CHEBI:15377"/>
        <dbReference type="ChEBI" id="CHEBI:15378"/>
        <dbReference type="ChEBI" id="CHEBI:29985"/>
        <dbReference type="ChEBI" id="CHEBI:30616"/>
        <dbReference type="ChEBI" id="CHEBI:43474"/>
        <dbReference type="ChEBI" id="CHEBI:58402"/>
        <dbReference type="ChEBI" id="CHEBI:456216"/>
        <dbReference type="EC" id="3.5.2.9"/>
    </reaction>
</comment>
<comment type="subunit">
    <text evidence="1">Forms a complex composed of PxpA, PxpB and PxpC.</text>
</comment>
<comment type="similarity">
    <text evidence="1">Belongs to the LamB/PxpA family.</text>
</comment>
<comment type="sequence caution" evidence="2">
    <conflict type="erroneous initiation">
        <sequence resource="EMBL-CDS" id="AAM84850"/>
    </conflict>
</comment>
<comment type="sequence caution" evidence="2">
    <conflict type="erroneous initiation">
        <sequence resource="EMBL-CDS" id="AAS62702"/>
    </conflict>
</comment>
<organism>
    <name type="scientific">Yersinia pestis</name>
    <dbReference type="NCBI Taxonomy" id="632"/>
    <lineage>
        <taxon>Bacteria</taxon>
        <taxon>Pseudomonadati</taxon>
        <taxon>Pseudomonadota</taxon>
        <taxon>Gammaproteobacteria</taxon>
        <taxon>Enterobacterales</taxon>
        <taxon>Yersiniaceae</taxon>
        <taxon>Yersinia</taxon>
    </lineage>
</organism>
<name>PXPA_YERPE</name>
<feature type="chain" id="PRO_0000185062" description="5-oxoprolinase subunit A">
    <location>
        <begin position="1"/>
        <end position="245"/>
    </location>
</feature>
<reference key="1">
    <citation type="journal article" date="2001" name="Nature">
        <title>Genome sequence of Yersinia pestis, the causative agent of plague.</title>
        <authorList>
            <person name="Parkhill J."/>
            <person name="Wren B.W."/>
            <person name="Thomson N.R."/>
            <person name="Titball R.W."/>
            <person name="Holden M.T.G."/>
            <person name="Prentice M.B."/>
            <person name="Sebaihia M."/>
            <person name="James K.D."/>
            <person name="Churcher C.M."/>
            <person name="Mungall K.L."/>
            <person name="Baker S."/>
            <person name="Basham D."/>
            <person name="Bentley S.D."/>
            <person name="Brooks K."/>
            <person name="Cerdeno-Tarraga A.-M."/>
            <person name="Chillingworth T."/>
            <person name="Cronin A."/>
            <person name="Davies R.M."/>
            <person name="Davis P."/>
            <person name="Dougan G."/>
            <person name="Feltwell T."/>
            <person name="Hamlin N."/>
            <person name="Holroyd S."/>
            <person name="Jagels K."/>
            <person name="Karlyshev A.V."/>
            <person name="Leather S."/>
            <person name="Moule S."/>
            <person name="Oyston P.C.F."/>
            <person name="Quail M.A."/>
            <person name="Rutherford K.M."/>
            <person name="Simmonds M."/>
            <person name="Skelton J."/>
            <person name="Stevens K."/>
            <person name="Whitehead S."/>
            <person name="Barrell B.G."/>
        </authorList>
    </citation>
    <scope>NUCLEOTIDE SEQUENCE [LARGE SCALE GENOMIC DNA]</scope>
    <source>
        <strain>CO-92 / Biovar Orientalis</strain>
    </source>
</reference>
<reference key="2">
    <citation type="journal article" date="2002" name="J. Bacteriol.">
        <title>Genome sequence of Yersinia pestis KIM.</title>
        <authorList>
            <person name="Deng W."/>
            <person name="Burland V."/>
            <person name="Plunkett G. III"/>
            <person name="Boutin A."/>
            <person name="Mayhew G.F."/>
            <person name="Liss P."/>
            <person name="Perna N.T."/>
            <person name="Rose D.J."/>
            <person name="Mau B."/>
            <person name="Zhou S."/>
            <person name="Schwartz D.C."/>
            <person name="Fetherston J.D."/>
            <person name="Lindler L.E."/>
            <person name="Brubaker R.R."/>
            <person name="Plano G.V."/>
            <person name="Straley S.C."/>
            <person name="McDonough K.A."/>
            <person name="Nilles M.L."/>
            <person name="Matson J.S."/>
            <person name="Blattner F.R."/>
            <person name="Perry R.D."/>
        </authorList>
    </citation>
    <scope>NUCLEOTIDE SEQUENCE [LARGE SCALE GENOMIC DNA]</scope>
    <source>
        <strain>KIM10+ / Biovar Mediaevalis</strain>
    </source>
</reference>
<reference key="3">
    <citation type="journal article" date="2004" name="DNA Res.">
        <title>Complete genome sequence of Yersinia pestis strain 91001, an isolate avirulent to humans.</title>
        <authorList>
            <person name="Song Y."/>
            <person name="Tong Z."/>
            <person name="Wang J."/>
            <person name="Wang L."/>
            <person name="Guo Z."/>
            <person name="Han Y."/>
            <person name="Zhang J."/>
            <person name="Pei D."/>
            <person name="Zhou D."/>
            <person name="Qin H."/>
            <person name="Pang X."/>
            <person name="Han Y."/>
            <person name="Zhai J."/>
            <person name="Li M."/>
            <person name="Cui B."/>
            <person name="Qi Z."/>
            <person name="Jin L."/>
            <person name="Dai R."/>
            <person name="Chen F."/>
            <person name="Li S."/>
            <person name="Ye C."/>
            <person name="Du Z."/>
            <person name="Lin W."/>
            <person name="Wang J."/>
            <person name="Yu J."/>
            <person name="Yang H."/>
            <person name="Wang J."/>
            <person name="Huang P."/>
            <person name="Yang R."/>
        </authorList>
    </citation>
    <scope>NUCLEOTIDE SEQUENCE [LARGE SCALE GENOMIC DNA]</scope>
    <source>
        <strain>91001 / Biovar Mediaevalis</strain>
    </source>
</reference>
<sequence>MKIDLNADLGEGCANDQALLQLVSSANIACGFHAGDAQTMRQSVRWALEYGVAIGAHPSFPDRENFGRTAMQLPPETVYAQVVYQLGALAAIVQVEGGVMQHVKPHGMLYNQAAVDPLLADAIAQAVKAVDPSLRLVGLAGSELIRAGTRVGLVTRQEVFADRHYQPDGTLVPRSQPDALIESDELALSQTLAMVQQHQVQACDGSWVQVQADTVCVHGDGVQALAFARCLRDRFQQEGISVIAQ</sequence>
<dbReference type="EC" id="3.5.2.9" evidence="1"/>
<dbReference type="EMBL" id="AL590842">
    <property type="protein sequence ID" value="CAL21319.1"/>
    <property type="molecule type" value="Genomic_DNA"/>
</dbReference>
<dbReference type="EMBL" id="AE009952">
    <property type="protein sequence ID" value="AAM84850.1"/>
    <property type="status" value="ALT_INIT"/>
    <property type="molecule type" value="Genomic_DNA"/>
</dbReference>
<dbReference type="EMBL" id="AE017042">
    <property type="protein sequence ID" value="AAS62702.1"/>
    <property type="status" value="ALT_INIT"/>
    <property type="molecule type" value="Genomic_DNA"/>
</dbReference>
<dbReference type="PIR" id="AD0329">
    <property type="entry name" value="AD0329"/>
</dbReference>
<dbReference type="RefSeq" id="WP_002209659.1">
    <property type="nucleotide sequence ID" value="NZ_WUCM01000006.1"/>
</dbReference>
<dbReference type="RefSeq" id="YP_002347647.1">
    <property type="nucleotide sequence ID" value="NC_003143.1"/>
</dbReference>
<dbReference type="SMR" id="Q8ZD89"/>
<dbReference type="STRING" id="214092.YPO2700"/>
<dbReference type="PaxDb" id="214092-YPO2700"/>
<dbReference type="DNASU" id="1146223"/>
<dbReference type="EnsemblBacteria" id="AAS62702">
    <property type="protein sequence ID" value="AAS62702"/>
    <property type="gene ID" value="YP_2504"/>
</dbReference>
<dbReference type="GeneID" id="57975991"/>
<dbReference type="KEGG" id="ype:YPO2700"/>
<dbReference type="KEGG" id="ypk:y1276"/>
<dbReference type="KEGG" id="ypm:YP_2504"/>
<dbReference type="PATRIC" id="fig|214092.21.peg.3138"/>
<dbReference type="eggNOG" id="COG1540">
    <property type="taxonomic scope" value="Bacteria"/>
</dbReference>
<dbReference type="HOGENOM" id="CLU_069535_0_0_6"/>
<dbReference type="OMA" id="VCIHGDT"/>
<dbReference type="OrthoDB" id="9773478at2"/>
<dbReference type="Proteomes" id="UP000000815">
    <property type="component" value="Chromosome"/>
</dbReference>
<dbReference type="Proteomes" id="UP000001019">
    <property type="component" value="Chromosome"/>
</dbReference>
<dbReference type="Proteomes" id="UP000002490">
    <property type="component" value="Chromosome"/>
</dbReference>
<dbReference type="GO" id="GO:0017168">
    <property type="term" value="F:5-oxoprolinase (ATP-hydrolyzing) activity"/>
    <property type="evidence" value="ECO:0007669"/>
    <property type="project" value="UniProtKB-UniRule"/>
</dbReference>
<dbReference type="GO" id="GO:0005524">
    <property type="term" value="F:ATP binding"/>
    <property type="evidence" value="ECO:0007669"/>
    <property type="project" value="UniProtKB-UniRule"/>
</dbReference>
<dbReference type="GO" id="GO:0005975">
    <property type="term" value="P:carbohydrate metabolic process"/>
    <property type="evidence" value="ECO:0007669"/>
    <property type="project" value="InterPro"/>
</dbReference>
<dbReference type="CDD" id="cd10800">
    <property type="entry name" value="LamB_YcsF_YbgL_like"/>
    <property type="match status" value="1"/>
</dbReference>
<dbReference type="Gene3D" id="3.20.20.370">
    <property type="entry name" value="Glycoside hydrolase/deacetylase"/>
    <property type="match status" value="1"/>
</dbReference>
<dbReference type="HAMAP" id="MF_00691">
    <property type="entry name" value="PxpA"/>
    <property type="match status" value="1"/>
</dbReference>
<dbReference type="InterPro" id="IPR011330">
    <property type="entry name" value="Glyco_hydro/deAcase_b/a-brl"/>
</dbReference>
<dbReference type="InterPro" id="IPR005501">
    <property type="entry name" value="LamB/YcsF/PxpA-like"/>
</dbReference>
<dbReference type="NCBIfam" id="NF003812">
    <property type="entry name" value="PRK05406.1-1"/>
    <property type="match status" value="1"/>
</dbReference>
<dbReference type="NCBIfam" id="NF003814">
    <property type="entry name" value="PRK05406.1-3"/>
    <property type="match status" value="1"/>
</dbReference>
<dbReference type="NCBIfam" id="NF003815">
    <property type="entry name" value="PRK05406.1-4"/>
    <property type="match status" value="1"/>
</dbReference>
<dbReference type="NCBIfam" id="NF003816">
    <property type="entry name" value="PRK05406.1-5"/>
    <property type="match status" value="1"/>
</dbReference>
<dbReference type="PANTHER" id="PTHR30292:SF0">
    <property type="entry name" value="5-OXOPROLINASE SUBUNIT A"/>
    <property type="match status" value="1"/>
</dbReference>
<dbReference type="PANTHER" id="PTHR30292">
    <property type="entry name" value="UNCHARACTERIZED PROTEIN YBGL-RELATED"/>
    <property type="match status" value="1"/>
</dbReference>
<dbReference type="Pfam" id="PF03746">
    <property type="entry name" value="LamB_YcsF"/>
    <property type="match status" value="1"/>
</dbReference>
<dbReference type="SUPFAM" id="SSF88713">
    <property type="entry name" value="Glycoside hydrolase/deacetylase"/>
    <property type="match status" value="1"/>
</dbReference>